<evidence type="ECO:0000255" key="1">
    <source>
        <dbReference type="HAMAP-Rule" id="MF_01145"/>
    </source>
</evidence>
<evidence type="ECO:0000256" key="2">
    <source>
        <dbReference type="SAM" id="MobiDB-lite"/>
    </source>
</evidence>
<reference key="1">
    <citation type="journal article" date="2005" name="J. Bacteriol.">
        <title>Insights on evolution of virulence and resistance from the complete genome analysis of an early methicillin-resistant Staphylococcus aureus strain and a biofilm-producing methicillin-resistant Staphylococcus epidermidis strain.</title>
        <authorList>
            <person name="Gill S.R."/>
            <person name="Fouts D.E."/>
            <person name="Archer G.L."/>
            <person name="Mongodin E.F."/>
            <person name="DeBoy R.T."/>
            <person name="Ravel J."/>
            <person name="Paulsen I.T."/>
            <person name="Kolonay J.F."/>
            <person name="Brinkac L.M."/>
            <person name="Beanan M.J."/>
            <person name="Dodson R.J."/>
            <person name="Daugherty S.C."/>
            <person name="Madupu R."/>
            <person name="Angiuoli S.V."/>
            <person name="Durkin A.S."/>
            <person name="Haft D.H."/>
            <person name="Vamathevan J.J."/>
            <person name="Khouri H."/>
            <person name="Utterback T.R."/>
            <person name="Lee C."/>
            <person name="Dimitrov G."/>
            <person name="Jiang L."/>
            <person name="Qin H."/>
            <person name="Weidman J."/>
            <person name="Tran K."/>
            <person name="Kang K.H."/>
            <person name="Hance I.R."/>
            <person name="Nelson K.E."/>
            <person name="Fraser C.M."/>
        </authorList>
    </citation>
    <scope>NUCLEOTIDE SEQUENCE [LARGE SCALE GENOMIC DNA]</scope>
    <source>
        <strain>ATCC 35984 / DSM 28319 / BCRC 17069 / CCUG 31568 / BM 3577 / RP62A</strain>
    </source>
</reference>
<name>PRSA_STAEQ</name>
<feature type="signal peptide" evidence="1">
    <location>
        <begin position="1"/>
        <end position="20"/>
    </location>
</feature>
<feature type="chain" id="PRO_0000042940" description="Foldase protein PrsA">
    <location>
        <begin position="21"/>
        <end position="325"/>
    </location>
</feature>
<feature type="domain" description="PpiC" evidence="1">
    <location>
        <begin position="139"/>
        <end position="245"/>
    </location>
</feature>
<feature type="region of interest" description="Disordered" evidence="2">
    <location>
        <begin position="159"/>
        <end position="200"/>
    </location>
</feature>
<feature type="region of interest" description="Disordered" evidence="2">
    <location>
        <begin position="303"/>
        <end position="325"/>
    </location>
</feature>
<feature type="lipid moiety-binding region" description="N-palmitoyl cysteine" evidence="1">
    <location>
        <position position="21"/>
    </location>
</feature>
<feature type="lipid moiety-binding region" description="S-diacylglycerol cysteine" evidence="1">
    <location>
        <position position="21"/>
    </location>
</feature>
<sequence>MKLMNKIIVPVTASALLLGACGSNATESKDNTLISSKAGDVKVADVMKKMGKEQIANTSFSIVLNKVLADKYKDKVDTKDIDKDIKKEEKQYGGKDQFESMLKQQGMSLDDYKEQKKLSAYQKQLLLDKVNVSDKEIKENSKKTSHILIKVKSKSSDKEGLSDKKAKEKAEKIQKEVEKNPNKFGEIAKKESMDSSSAKKDGSLGYVIKGQMVDSFEKALFKLKEGEVSKVVKTDYGYHIIKADKETDFNSEKSNIKQKLIEEKVQKKPKLLTDAYKELLKEYKVDYKDRDIKKAIEDSILDPDKIKQQQQQQSQGGSGLTNSGS</sequence>
<dbReference type="EC" id="5.2.1.8" evidence="1"/>
<dbReference type="EMBL" id="CP000029">
    <property type="protein sequence ID" value="AAW54761.1"/>
    <property type="molecule type" value="Genomic_DNA"/>
</dbReference>
<dbReference type="RefSeq" id="WP_002456352.1">
    <property type="nucleotide sequence ID" value="NC_002976.3"/>
</dbReference>
<dbReference type="SMR" id="Q5HN96"/>
<dbReference type="STRING" id="176279.SERP1376"/>
<dbReference type="KEGG" id="ser:SERP1376"/>
<dbReference type="eggNOG" id="COG0760">
    <property type="taxonomic scope" value="Bacteria"/>
</dbReference>
<dbReference type="HOGENOM" id="CLU_034646_6_2_9"/>
<dbReference type="Proteomes" id="UP000000531">
    <property type="component" value="Chromosome"/>
</dbReference>
<dbReference type="GO" id="GO:0005886">
    <property type="term" value="C:plasma membrane"/>
    <property type="evidence" value="ECO:0007669"/>
    <property type="project" value="UniProtKB-SubCell"/>
</dbReference>
<dbReference type="GO" id="GO:0003755">
    <property type="term" value="F:peptidyl-prolyl cis-trans isomerase activity"/>
    <property type="evidence" value="ECO:0007669"/>
    <property type="project" value="UniProtKB-UniRule"/>
</dbReference>
<dbReference type="GO" id="GO:0006457">
    <property type="term" value="P:protein folding"/>
    <property type="evidence" value="ECO:0007669"/>
    <property type="project" value="UniProtKB-UniRule"/>
</dbReference>
<dbReference type="Gene3D" id="3.10.50.40">
    <property type="match status" value="1"/>
</dbReference>
<dbReference type="HAMAP" id="MF_01145">
    <property type="entry name" value="Foldase_PrsA"/>
    <property type="match status" value="1"/>
</dbReference>
<dbReference type="InterPro" id="IPR023059">
    <property type="entry name" value="Foldase_PrsA"/>
</dbReference>
<dbReference type="InterPro" id="IPR046357">
    <property type="entry name" value="PPIase_dom_sf"/>
</dbReference>
<dbReference type="InterPro" id="IPR000297">
    <property type="entry name" value="PPIase_PpiC"/>
</dbReference>
<dbReference type="InterPro" id="IPR050245">
    <property type="entry name" value="PrsA_foldase"/>
</dbReference>
<dbReference type="InterPro" id="IPR027304">
    <property type="entry name" value="Trigger_fact/SurA_dom_sf"/>
</dbReference>
<dbReference type="PANTHER" id="PTHR47245:SF1">
    <property type="entry name" value="FOLDASE PROTEIN PRSA"/>
    <property type="match status" value="1"/>
</dbReference>
<dbReference type="PANTHER" id="PTHR47245">
    <property type="entry name" value="PEPTIDYLPROLYL ISOMERASE"/>
    <property type="match status" value="1"/>
</dbReference>
<dbReference type="Pfam" id="PF00639">
    <property type="entry name" value="Rotamase"/>
    <property type="match status" value="1"/>
</dbReference>
<dbReference type="SUPFAM" id="SSF54534">
    <property type="entry name" value="FKBP-like"/>
    <property type="match status" value="1"/>
</dbReference>
<dbReference type="SUPFAM" id="SSF109998">
    <property type="entry name" value="Triger factor/SurA peptide-binding domain-like"/>
    <property type="match status" value="1"/>
</dbReference>
<dbReference type="PROSITE" id="PS50198">
    <property type="entry name" value="PPIC_PPIASE_2"/>
    <property type="match status" value="1"/>
</dbReference>
<dbReference type="PROSITE" id="PS51257">
    <property type="entry name" value="PROKAR_LIPOPROTEIN"/>
    <property type="match status" value="1"/>
</dbReference>
<accession>Q5HN96</accession>
<gene>
    <name evidence="1" type="primary">prsA</name>
    <name type="ordered locus">SERP1376</name>
</gene>
<comment type="function">
    <text evidence="1">Plays a major role in protein secretion by helping the post-translocational extracellular folding of several secreted proteins.</text>
</comment>
<comment type="catalytic activity">
    <reaction evidence="1">
        <text>[protein]-peptidylproline (omega=180) = [protein]-peptidylproline (omega=0)</text>
        <dbReference type="Rhea" id="RHEA:16237"/>
        <dbReference type="Rhea" id="RHEA-COMP:10747"/>
        <dbReference type="Rhea" id="RHEA-COMP:10748"/>
        <dbReference type="ChEBI" id="CHEBI:83833"/>
        <dbReference type="ChEBI" id="CHEBI:83834"/>
        <dbReference type="EC" id="5.2.1.8"/>
    </reaction>
</comment>
<comment type="subcellular location">
    <subcellularLocation>
        <location evidence="1">Cell membrane</location>
        <topology evidence="1">Lipid-anchor</topology>
    </subcellularLocation>
</comment>
<comment type="similarity">
    <text evidence="1">Belongs to the PrsA family.</text>
</comment>
<organism>
    <name type="scientific">Staphylococcus epidermidis (strain ATCC 35984 / DSM 28319 / BCRC 17069 / CCUG 31568 / BM 3577 / RP62A)</name>
    <dbReference type="NCBI Taxonomy" id="176279"/>
    <lineage>
        <taxon>Bacteria</taxon>
        <taxon>Bacillati</taxon>
        <taxon>Bacillota</taxon>
        <taxon>Bacilli</taxon>
        <taxon>Bacillales</taxon>
        <taxon>Staphylococcaceae</taxon>
        <taxon>Staphylococcus</taxon>
    </lineage>
</organism>
<proteinExistence type="inferred from homology"/>
<keyword id="KW-1003">Cell membrane</keyword>
<keyword id="KW-0413">Isomerase</keyword>
<keyword id="KW-0449">Lipoprotein</keyword>
<keyword id="KW-0472">Membrane</keyword>
<keyword id="KW-0564">Palmitate</keyword>
<keyword id="KW-1185">Reference proteome</keyword>
<keyword id="KW-0697">Rotamase</keyword>
<keyword id="KW-0732">Signal</keyword>
<protein>
    <recommendedName>
        <fullName evidence="1">Foldase protein PrsA</fullName>
        <ecNumber evidence="1">5.2.1.8</ecNumber>
    </recommendedName>
</protein>